<feature type="chain" id="PRO_1000203315" description="tRNA-specific 2-thiouridylase MnmA">
    <location>
        <begin position="1"/>
        <end position="374"/>
    </location>
</feature>
<feature type="region of interest" description="Interaction with target base in tRNA" evidence="1">
    <location>
        <begin position="99"/>
        <end position="101"/>
    </location>
</feature>
<feature type="region of interest" description="Interaction with tRNA" evidence="1">
    <location>
        <begin position="151"/>
        <end position="153"/>
    </location>
</feature>
<feature type="region of interest" description="Interaction with tRNA" evidence="1">
    <location>
        <begin position="313"/>
        <end position="314"/>
    </location>
</feature>
<feature type="active site" description="Nucleophile" evidence="1">
    <location>
        <position position="104"/>
    </location>
</feature>
<feature type="active site" description="Cysteine persulfide intermediate" evidence="1">
    <location>
        <position position="201"/>
    </location>
</feature>
<feature type="binding site" evidence="1">
    <location>
        <begin position="13"/>
        <end position="20"/>
    </location>
    <ligand>
        <name>ATP</name>
        <dbReference type="ChEBI" id="CHEBI:30616"/>
    </ligand>
</feature>
<feature type="binding site" evidence="1">
    <location>
        <position position="39"/>
    </location>
    <ligand>
        <name>ATP</name>
        <dbReference type="ChEBI" id="CHEBI:30616"/>
    </ligand>
</feature>
<feature type="binding site" evidence="1">
    <location>
        <position position="128"/>
    </location>
    <ligand>
        <name>ATP</name>
        <dbReference type="ChEBI" id="CHEBI:30616"/>
    </ligand>
</feature>
<feature type="site" description="Interaction with tRNA" evidence="1">
    <location>
        <position position="129"/>
    </location>
</feature>
<feature type="site" description="Interaction with tRNA" evidence="1">
    <location>
        <position position="345"/>
    </location>
</feature>
<feature type="disulfide bond" description="Alternate" evidence="1">
    <location>
        <begin position="104"/>
        <end position="201"/>
    </location>
</feature>
<evidence type="ECO:0000255" key="1">
    <source>
        <dbReference type="HAMAP-Rule" id="MF_00144"/>
    </source>
</evidence>
<gene>
    <name evidence="1" type="primary">mnmA</name>
    <name type="ordered locus">SZO_19140</name>
</gene>
<dbReference type="EC" id="2.8.1.13" evidence="1"/>
<dbReference type="EMBL" id="FM204884">
    <property type="protein sequence ID" value="CAX00880.1"/>
    <property type="molecule type" value="Genomic_DNA"/>
</dbReference>
<dbReference type="SMR" id="C0MGQ2"/>
<dbReference type="KEGG" id="seq:SZO_19140"/>
<dbReference type="eggNOG" id="COG0482">
    <property type="taxonomic scope" value="Bacteria"/>
</dbReference>
<dbReference type="HOGENOM" id="CLU_035188_1_0_9"/>
<dbReference type="Proteomes" id="UP000001368">
    <property type="component" value="Chromosome"/>
</dbReference>
<dbReference type="GO" id="GO:0005737">
    <property type="term" value="C:cytoplasm"/>
    <property type="evidence" value="ECO:0007669"/>
    <property type="project" value="UniProtKB-SubCell"/>
</dbReference>
<dbReference type="GO" id="GO:0005524">
    <property type="term" value="F:ATP binding"/>
    <property type="evidence" value="ECO:0007669"/>
    <property type="project" value="UniProtKB-KW"/>
</dbReference>
<dbReference type="GO" id="GO:0000049">
    <property type="term" value="F:tRNA binding"/>
    <property type="evidence" value="ECO:0007669"/>
    <property type="project" value="UniProtKB-KW"/>
</dbReference>
<dbReference type="GO" id="GO:0103016">
    <property type="term" value="F:tRNA-uridine 2-sulfurtransferase activity"/>
    <property type="evidence" value="ECO:0007669"/>
    <property type="project" value="UniProtKB-EC"/>
</dbReference>
<dbReference type="GO" id="GO:0002143">
    <property type="term" value="P:tRNA wobble position uridine thiolation"/>
    <property type="evidence" value="ECO:0007669"/>
    <property type="project" value="TreeGrafter"/>
</dbReference>
<dbReference type="CDD" id="cd01998">
    <property type="entry name" value="MnmA_TRMU-like"/>
    <property type="match status" value="1"/>
</dbReference>
<dbReference type="FunFam" id="2.30.30.280:FF:000001">
    <property type="entry name" value="tRNA-specific 2-thiouridylase MnmA"/>
    <property type="match status" value="1"/>
</dbReference>
<dbReference type="FunFam" id="2.40.30.10:FF:000023">
    <property type="entry name" value="tRNA-specific 2-thiouridylase MnmA"/>
    <property type="match status" value="1"/>
</dbReference>
<dbReference type="FunFam" id="3.40.50.620:FF:000004">
    <property type="entry name" value="tRNA-specific 2-thiouridylase MnmA"/>
    <property type="match status" value="1"/>
</dbReference>
<dbReference type="Gene3D" id="2.30.30.280">
    <property type="entry name" value="Adenine nucleotide alpha hydrolases-like domains"/>
    <property type="match status" value="1"/>
</dbReference>
<dbReference type="Gene3D" id="3.40.50.620">
    <property type="entry name" value="HUPs"/>
    <property type="match status" value="1"/>
</dbReference>
<dbReference type="Gene3D" id="2.40.30.10">
    <property type="entry name" value="Translation factors"/>
    <property type="match status" value="1"/>
</dbReference>
<dbReference type="HAMAP" id="MF_00144">
    <property type="entry name" value="tRNA_thiouridyl_MnmA"/>
    <property type="match status" value="1"/>
</dbReference>
<dbReference type="InterPro" id="IPR004506">
    <property type="entry name" value="MnmA-like"/>
</dbReference>
<dbReference type="InterPro" id="IPR046885">
    <property type="entry name" value="MnmA-like_C"/>
</dbReference>
<dbReference type="InterPro" id="IPR046884">
    <property type="entry name" value="MnmA-like_central"/>
</dbReference>
<dbReference type="InterPro" id="IPR023382">
    <property type="entry name" value="MnmA-like_central_sf"/>
</dbReference>
<dbReference type="InterPro" id="IPR014729">
    <property type="entry name" value="Rossmann-like_a/b/a_fold"/>
</dbReference>
<dbReference type="NCBIfam" id="NF001138">
    <property type="entry name" value="PRK00143.1"/>
    <property type="match status" value="1"/>
</dbReference>
<dbReference type="NCBIfam" id="TIGR00420">
    <property type="entry name" value="trmU"/>
    <property type="match status" value="1"/>
</dbReference>
<dbReference type="PANTHER" id="PTHR11933:SF5">
    <property type="entry name" value="MITOCHONDRIAL TRNA-SPECIFIC 2-THIOURIDYLASE 1"/>
    <property type="match status" value="1"/>
</dbReference>
<dbReference type="PANTHER" id="PTHR11933">
    <property type="entry name" value="TRNA 5-METHYLAMINOMETHYL-2-THIOURIDYLATE -METHYLTRANSFERASE"/>
    <property type="match status" value="1"/>
</dbReference>
<dbReference type="Pfam" id="PF03054">
    <property type="entry name" value="tRNA_Me_trans"/>
    <property type="match status" value="1"/>
</dbReference>
<dbReference type="Pfam" id="PF20258">
    <property type="entry name" value="tRNA_Me_trans_C"/>
    <property type="match status" value="1"/>
</dbReference>
<dbReference type="Pfam" id="PF20259">
    <property type="entry name" value="tRNA_Me_trans_M"/>
    <property type="match status" value="1"/>
</dbReference>
<dbReference type="SUPFAM" id="SSF52402">
    <property type="entry name" value="Adenine nucleotide alpha hydrolases-like"/>
    <property type="match status" value="1"/>
</dbReference>
<organism>
    <name type="scientific">Streptococcus equi subsp. zooepidemicus (strain H70)</name>
    <dbReference type="NCBI Taxonomy" id="553483"/>
    <lineage>
        <taxon>Bacteria</taxon>
        <taxon>Bacillati</taxon>
        <taxon>Bacillota</taxon>
        <taxon>Bacilli</taxon>
        <taxon>Lactobacillales</taxon>
        <taxon>Streptococcaceae</taxon>
        <taxon>Streptococcus</taxon>
    </lineage>
</organism>
<accession>C0MGQ2</accession>
<reference key="1">
    <citation type="journal article" date="2009" name="PLoS Pathog.">
        <title>Genomic evidence for the evolution of Streptococcus equi: host restriction, increased virulence, and genetic exchange with human pathogens.</title>
        <authorList>
            <person name="Holden M.T.G."/>
            <person name="Heather Z."/>
            <person name="Paillot R."/>
            <person name="Steward K.F."/>
            <person name="Webb K."/>
            <person name="Ainslie F."/>
            <person name="Jourdan T."/>
            <person name="Bason N.C."/>
            <person name="Holroyd N.E."/>
            <person name="Mungall K."/>
            <person name="Quail M.A."/>
            <person name="Sanders M."/>
            <person name="Simmonds M."/>
            <person name="Willey D."/>
            <person name="Brooks K."/>
            <person name="Aanensen D.M."/>
            <person name="Spratt B.G."/>
            <person name="Jolley K.A."/>
            <person name="Maiden M.C.J."/>
            <person name="Kehoe M."/>
            <person name="Chanter N."/>
            <person name="Bentley S.D."/>
            <person name="Robinson C."/>
            <person name="Maskell D.J."/>
            <person name="Parkhill J."/>
            <person name="Waller A.S."/>
        </authorList>
    </citation>
    <scope>NUCLEOTIDE SEQUENCE [LARGE SCALE GENOMIC DNA]</scope>
    <source>
        <strain>H70</strain>
    </source>
</reference>
<protein>
    <recommendedName>
        <fullName evidence="1">tRNA-specific 2-thiouridylase MnmA</fullName>
        <ecNumber evidence="1">2.8.1.13</ecNumber>
    </recommendedName>
</protein>
<sequence length="374" mass="41882">MMTDNSKTRVVVGMSGGVDSSVTALLLKEQGYDVIGVFMKNWDDTDEFGVCTATEDYKDVAAVADQIGIPYYSVNFEKEYWDRVFEYFLAEYRSGRTPNPDVMCNKEIKFKAFLDYAMTLGADYVATGHYAQIKRDENGVVHMLRGFDKGKDQTYFLSQLSQKQLQKTMFPLGHLQKSEVRAIAEQAGLATAKKKDSTGICFIGEKNFKTFLSHYLPAQKGRMMTVDGRDMGEHAGLMYYTIGQRGGLGIGGQQGGDNKPWFVVGKDLSQNILYVGQGFYHESLMSTSLDASVIQFTREVPEEFTLECTAKFRYRQPDSKVTVHVKKDKAKVVFAEPQRAITPGQAVVFYDGHECLGGGIIDMAYKDGEPCQYI</sequence>
<proteinExistence type="inferred from homology"/>
<comment type="function">
    <text evidence="1">Catalyzes the 2-thiolation of uridine at the wobble position (U34) of tRNA, leading to the formation of s(2)U34.</text>
</comment>
<comment type="catalytic activity">
    <reaction evidence="1">
        <text>S-sulfanyl-L-cysteinyl-[protein] + uridine(34) in tRNA + AH2 + ATP = 2-thiouridine(34) in tRNA + L-cysteinyl-[protein] + A + AMP + diphosphate + H(+)</text>
        <dbReference type="Rhea" id="RHEA:47032"/>
        <dbReference type="Rhea" id="RHEA-COMP:10131"/>
        <dbReference type="Rhea" id="RHEA-COMP:11726"/>
        <dbReference type="Rhea" id="RHEA-COMP:11727"/>
        <dbReference type="Rhea" id="RHEA-COMP:11728"/>
        <dbReference type="ChEBI" id="CHEBI:13193"/>
        <dbReference type="ChEBI" id="CHEBI:15378"/>
        <dbReference type="ChEBI" id="CHEBI:17499"/>
        <dbReference type="ChEBI" id="CHEBI:29950"/>
        <dbReference type="ChEBI" id="CHEBI:30616"/>
        <dbReference type="ChEBI" id="CHEBI:33019"/>
        <dbReference type="ChEBI" id="CHEBI:61963"/>
        <dbReference type="ChEBI" id="CHEBI:65315"/>
        <dbReference type="ChEBI" id="CHEBI:87170"/>
        <dbReference type="ChEBI" id="CHEBI:456215"/>
        <dbReference type="EC" id="2.8.1.13"/>
    </reaction>
</comment>
<comment type="subcellular location">
    <subcellularLocation>
        <location evidence="1">Cytoplasm</location>
    </subcellularLocation>
</comment>
<comment type="similarity">
    <text evidence="1">Belongs to the MnmA/TRMU family.</text>
</comment>
<keyword id="KW-0067">ATP-binding</keyword>
<keyword id="KW-0963">Cytoplasm</keyword>
<keyword id="KW-1015">Disulfide bond</keyword>
<keyword id="KW-0547">Nucleotide-binding</keyword>
<keyword id="KW-0694">RNA-binding</keyword>
<keyword id="KW-0808">Transferase</keyword>
<keyword id="KW-0819">tRNA processing</keyword>
<keyword id="KW-0820">tRNA-binding</keyword>
<name>MNMA_STRS7</name>